<dbReference type="EMBL" id="AL672100">
    <property type="status" value="NOT_ANNOTATED_CDS"/>
    <property type="molecule type" value="Genomic_DNA"/>
</dbReference>
<dbReference type="EMBL" id="AL732467">
    <property type="status" value="NOT_ANNOTATED_CDS"/>
    <property type="molecule type" value="Genomic_DNA"/>
</dbReference>
<dbReference type="EMBL" id="AL935056">
    <property type="status" value="NOT_ANNOTATED_CDS"/>
    <property type="molecule type" value="Genomic_DNA"/>
</dbReference>
<dbReference type="EMBL" id="BC024760">
    <property type="protein sequence ID" value="AAH24760.1"/>
    <property type="molecule type" value="mRNA"/>
</dbReference>
<dbReference type="EMBL" id="BC107030">
    <property type="protein sequence ID" value="AAI07031.1"/>
    <property type="molecule type" value="mRNA"/>
</dbReference>
<dbReference type="EMBL" id="BC107031">
    <property type="protein sequence ID" value="AAI07032.1"/>
    <property type="molecule type" value="mRNA"/>
</dbReference>
<dbReference type="EMBL" id="AK019712">
    <property type="protein sequence ID" value="BAC25604.1"/>
    <property type="status" value="ALT_FRAME"/>
    <property type="molecule type" value="mRNA"/>
</dbReference>
<dbReference type="SMR" id="Q8CEL2"/>
<dbReference type="FunCoup" id="Q8CEL2">
    <property type="interactions" value="15"/>
</dbReference>
<dbReference type="STRING" id="10090.ENSMUSP00000112099"/>
<dbReference type="iPTMnet" id="Q8CEL2"/>
<dbReference type="PhosphoSitePlus" id="Q8CEL2"/>
<dbReference type="PaxDb" id="10090-ENSMUSP00000112099"/>
<dbReference type="ProteomicsDB" id="281650">
    <molecule id="Q8CEL2-1"/>
</dbReference>
<dbReference type="ProteomicsDB" id="281651">
    <molecule id="Q8CEL2-2"/>
</dbReference>
<dbReference type="AGR" id="MGI:1926024"/>
<dbReference type="MGI" id="MGI:1926024">
    <property type="gene designation" value="Cfap61"/>
</dbReference>
<dbReference type="eggNOG" id="ENOG502QSEC">
    <property type="taxonomic scope" value="Eukaryota"/>
</dbReference>
<dbReference type="InParanoid" id="Q8CEL2"/>
<dbReference type="ChiTaRS" id="Cfap61">
    <property type="organism name" value="mouse"/>
</dbReference>
<dbReference type="PRO" id="PR:Q8CEL2"/>
<dbReference type="Proteomes" id="UP000000589">
    <property type="component" value="Unplaced"/>
</dbReference>
<dbReference type="RNAct" id="Q8CEL2">
    <property type="molecule type" value="protein"/>
</dbReference>
<dbReference type="GO" id="GO:0005930">
    <property type="term" value="C:axoneme"/>
    <property type="evidence" value="ECO:0000314"/>
    <property type="project" value="MGI"/>
</dbReference>
<dbReference type="GO" id="GO:0031514">
    <property type="term" value="C:motile cilium"/>
    <property type="evidence" value="ECO:0000250"/>
    <property type="project" value="UniProtKB"/>
</dbReference>
<dbReference type="GO" id="GO:0001534">
    <property type="term" value="C:radial spoke"/>
    <property type="evidence" value="ECO:0000247"/>
    <property type="project" value="MGI"/>
</dbReference>
<dbReference type="GO" id="GO:0001536">
    <property type="term" value="C:radial spoke stalk"/>
    <property type="evidence" value="ECO:0000353"/>
    <property type="project" value="MGI"/>
</dbReference>
<dbReference type="GO" id="GO:0036126">
    <property type="term" value="C:sperm flagellum"/>
    <property type="evidence" value="ECO:0000314"/>
    <property type="project" value="MGI"/>
</dbReference>
<dbReference type="GO" id="GO:0003341">
    <property type="term" value="P:cilium movement"/>
    <property type="evidence" value="ECO:0000250"/>
    <property type="project" value="UniProtKB"/>
</dbReference>
<dbReference type="GO" id="GO:0044782">
    <property type="term" value="P:cilium organization"/>
    <property type="evidence" value="ECO:0000250"/>
    <property type="project" value="UniProtKB"/>
</dbReference>
<dbReference type="GO" id="GO:0030317">
    <property type="term" value="P:flagellated sperm motility"/>
    <property type="evidence" value="ECO:0000315"/>
    <property type="project" value="MGI"/>
</dbReference>
<dbReference type="GO" id="GO:0120316">
    <property type="term" value="P:sperm flagellum assembly"/>
    <property type="evidence" value="ECO:0000315"/>
    <property type="project" value="MGI"/>
</dbReference>
<dbReference type="GO" id="GO:0007290">
    <property type="term" value="P:spermatid nucleus elongation"/>
    <property type="evidence" value="ECO:0000315"/>
    <property type="project" value="MGI"/>
</dbReference>
<dbReference type="Gene3D" id="3.40.630.30">
    <property type="match status" value="1"/>
</dbReference>
<dbReference type="Gene3D" id="3.50.50.60">
    <property type="entry name" value="FAD/NAD(P)-binding domain"/>
    <property type="match status" value="2"/>
</dbReference>
<dbReference type="InterPro" id="IPR016181">
    <property type="entry name" value="Acyl_CoA_acyltransferase"/>
</dbReference>
<dbReference type="InterPro" id="IPR038884">
    <property type="entry name" value="CFAP61"/>
</dbReference>
<dbReference type="InterPro" id="IPR056299">
    <property type="entry name" value="CFAP61_dimer"/>
</dbReference>
<dbReference type="InterPro" id="IPR032151">
    <property type="entry name" value="CFAP61_N"/>
</dbReference>
<dbReference type="InterPro" id="IPR036188">
    <property type="entry name" value="FAD/NAD-bd_sf"/>
</dbReference>
<dbReference type="PANTHER" id="PTHR21178">
    <property type="entry name" value="CILIA- AND FLAGELLA-ASSOCIATED PROTEIN 61"/>
    <property type="match status" value="1"/>
</dbReference>
<dbReference type="PANTHER" id="PTHR21178:SF8">
    <property type="entry name" value="CILIA- AND FLAGELLA-ASSOCIATED PROTEIN 61"/>
    <property type="match status" value="1"/>
</dbReference>
<dbReference type="Pfam" id="PF23150">
    <property type="entry name" value="CFAP61_dimer"/>
    <property type="match status" value="1"/>
</dbReference>
<dbReference type="Pfam" id="PF16092">
    <property type="entry name" value="CFAP61_N"/>
    <property type="match status" value="1"/>
</dbReference>
<dbReference type="SUPFAM" id="SSF55729">
    <property type="entry name" value="Acyl-CoA N-acyltransferases (Nat)"/>
    <property type="match status" value="1"/>
</dbReference>
<dbReference type="SUPFAM" id="SSF51905">
    <property type="entry name" value="FAD/NAD(P)-binding domain"/>
    <property type="match status" value="1"/>
</dbReference>
<reference key="1">
    <citation type="journal article" date="2009" name="PLoS Biol.">
        <title>Lineage-specific biology revealed by a finished genome assembly of the mouse.</title>
        <authorList>
            <person name="Church D.M."/>
            <person name="Goodstadt L."/>
            <person name="Hillier L.W."/>
            <person name="Zody M.C."/>
            <person name="Goldstein S."/>
            <person name="She X."/>
            <person name="Bult C.J."/>
            <person name="Agarwala R."/>
            <person name="Cherry J.L."/>
            <person name="DiCuccio M."/>
            <person name="Hlavina W."/>
            <person name="Kapustin Y."/>
            <person name="Meric P."/>
            <person name="Maglott D."/>
            <person name="Birtle Z."/>
            <person name="Marques A.C."/>
            <person name="Graves T."/>
            <person name="Zhou S."/>
            <person name="Teague B."/>
            <person name="Potamousis K."/>
            <person name="Churas C."/>
            <person name="Place M."/>
            <person name="Herschleb J."/>
            <person name="Runnheim R."/>
            <person name="Forrest D."/>
            <person name="Amos-Landgraf J."/>
            <person name="Schwartz D.C."/>
            <person name="Cheng Z."/>
            <person name="Lindblad-Toh K."/>
            <person name="Eichler E.E."/>
            <person name="Ponting C.P."/>
        </authorList>
    </citation>
    <scope>NUCLEOTIDE SEQUENCE [LARGE SCALE GENOMIC DNA]</scope>
    <source>
        <strain>C57BL/6J</strain>
    </source>
</reference>
<reference key="2">
    <citation type="journal article" date="2004" name="Genome Res.">
        <title>The status, quality, and expansion of the NIH full-length cDNA project: the Mammalian Gene Collection (MGC).</title>
        <authorList>
            <consortium name="The MGC Project Team"/>
        </authorList>
    </citation>
    <scope>NUCLEOTIDE SEQUENCE [LARGE SCALE MRNA] (ISOFORM 2)</scope>
    <scope>NUCLEOTIDE SEQUENCE [LARGE SCALE MRNA] OF 655-1252 (ISOFORM 1)</scope>
    <source>
        <strain>C57BL/6J</strain>
        <tissue>Eye</tissue>
    </source>
</reference>
<reference key="3">
    <citation type="journal article" date="2005" name="Science">
        <title>The transcriptional landscape of the mammalian genome.</title>
        <authorList>
            <person name="Carninci P."/>
            <person name="Kasukawa T."/>
            <person name="Katayama S."/>
            <person name="Gough J."/>
            <person name="Frith M.C."/>
            <person name="Maeda N."/>
            <person name="Oyama R."/>
            <person name="Ravasi T."/>
            <person name="Lenhard B."/>
            <person name="Wells C."/>
            <person name="Kodzius R."/>
            <person name="Shimokawa K."/>
            <person name="Bajic V.B."/>
            <person name="Brenner S.E."/>
            <person name="Batalov S."/>
            <person name="Forrest A.R."/>
            <person name="Zavolan M."/>
            <person name="Davis M.J."/>
            <person name="Wilming L.G."/>
            <person name="Aidinis V."/>
            <person name="Allen J.E."/>
            <person name="Ambesi-Impiombato A."/>
            <person name="Apweiler R."/>
            <person name="Aturaliya R.N."/>
            <person name="Bailey T.L."/>
            <person name="Bansal M."/>
            <person name="Baxter L."/>
            <person name="Beisel K.W."/>
            <person name="Bersano T."/>
            <person name="Bono H."/>
            <person name="Chalk A.M."/>
            <person name="Chiu K.P."/>
            <person name="Choudhary V."/>
            <person name="Christoffels A."/>
            <person name="Clutterbuck D.R."/>
            <person name="Crowe M.L."/>
            <person name="Dalla E."/>
            <person name="Dalrymple B.P."/>
            <person name="de Bono B."/>
            <person name="Della Gatta G."/>
            <person name="di Bernardo D."/>
            <person name="Down T."/>
            <person name="Engstrom P."/>
            <person name="Fagiolini M."/>
            <person name="Faulkner G."/>
            <person name="Fletcher C.F."/>
            <person name="Fukushima T."/>
            <person name="Furuno M."/>
            <person name="Futaki S."/>
            <person name="Gariboldi M."/>
            <person name="Georgii-Hemming P."/>
            <person name="Gingeras T.R."/>
            <person name="Gojobori T."/>
            <person name="Green R.E."/>
            <person name="Gustincich S."/>
            <person name="Harbers M."/>
            <person name="Hayashi Y."/>
            <person name="Hensch T.K."/>
            <person name="Hirokawa N."/>
            <person name="Hill D."/>
            <person name="Huminiecki L."/>
            <person name="Iacono M."/>
            <person name="Ikeo K."/>
            <person name="Iwama A."/>
            <person name="Ishikawa T."/>
            <person name="Jakt M."/>
            <person name="Kanapin A."/>
            <person name="Katoh M."/>
            <person name="Kawasawa Y."/>
            <person name="Kelso J."/>
            <person name="Kitamura H."/>
            <person name="Kitano H."/>
            <person name="Kollias G."/>
            <person name="Krishnan S.P."/>
            <person name="Kruger A."/>
            <person name="Kummerfeld S.K."/>
            <person name="Kurochkin I.V."/>
            <person name="Lareau L.F."/>
            <person name="Lazarevic D."/>
            <person name="Lipovich L."/>
            <person name="Liu J."/>
            <person name="Liuni S."/>
            <person name="McWilliam S."/>
            <person name="Madan Babu M."/>
            <person name="Madera M."/>
            <person name="Marchionni L."/>
            <person name="Matsuda H."/>
            <person name="Matsuzawa S."/>
            <person name="Miki H."/>
            <person name="Mignone F."/>
            <person name="Miyake S."/>
            <person name="Morris K."/>
            <person name="Mottagui-Tabar S."/>
            <person name="Mulder N."/>
            <person name="Nakano N."/>
            <person name="Nakauchi H."/>
            <person name="Ng P."/>
            <person name="Nilsson R."/>
            <person name="Nishiguchi S."/>
            <person name="Nishikawa S."/>
            <person name="Nori F."/>
            <person name="Ohara O."/>
            <person name="Okazaki Y."/>
            <person name="Orlando V."/>
            <person name="Pang K.C."/>
            <person name="Pavan W.J."/>
            <person name="Pavesi G."/>
            <person name="Pesole G."/>
            <person name="Petrovsky N."/>
            <person name="Piazza S."/>
            <person name="Reed J."/>
            <person name="Reid J.F."/>
            <person name="Ring B.Z."/>
            <person name="Ringwald M."/>
            <person name="Rost B."/>
            <person name="Ruan Y."/>
            <person name="Salzberg S.L."/>
            <person name="Sandelin A."/>
            <person name="Schneider C."/>
            <person name="Schoenbach C."/>
            <person name="Sekiguchi K."/>
            <person name="Semple C.A."/>
            <person name="Seno S."/>
            <person name="Sessa L."/>
            <person name="Sheng Y."/>
            <person name="Shibata Y."/>
            <person name="Shimada H."/>
            <person name="Shimada K."/>
            <person name="Silva D."/>
            <person name="Sinclair B."/>
            <person name="Sperling S."/>
            <person name="Stupka E."/>
            <person name="Sugiura K."/>
            <person name="Sultana R."/>
            <person name="Takenaka Y."/>
            <person name="Taki K."/>
            <person name="Tammoja K."/>
            <person name="Tan S.L."/>
            <person name="Tang S."/>
            <person name="Taylor M.S."/>
            <person name="Tegner J."/>
            <person name="Teichmann S.A."/>
            <person name="Ueda H.R."/>
            <person name="van Nimwegen E."/>
            <person name="Verardo R."/>
            <person name="Wei C.L."/>
            <person name="Yagi K."/>
            <person name="Yamanishi H."/>
            <person name="Zabarovsky E."/>
            <person name="Zhu S."/>
            <person name="Zimmer A."/>
            <person name="Hide W."/>
            <person name="Bult C."/>
            <person name="Grimmond S.M."/>
            <person name="Teasdale R.D."/>
            <person name="Liu E.T."/>
            <person name="Brusic V."/>
            <person name="Quackenbush J."/>
            <person name="Wahlestedt C."/>
            <person name="Mattick J.S."/>
            <person name="Hume D.A."/>
            <person name="Kai C."/>
            <person name="Sasaki D."/>
            <person name="Tomaru Y."/>
            <person name="Fukuda S."/>
            <person name="Kanamori-Katayama M."/>
            <person name="Suzuki M."/>
            <person name="Aoki J."/>
            <person name="Arakawa T."/>
            <person name="Iida J."/>
            <person name="Imamura K."/>
            <person name="Itoh M."/>
            <person name="Kato T."/>
            <person name="Kawaji H."/>
            <person name="Kawagashira N."/>
            <person name="Kawashima T."/>
            <person name="Kojima M."/>
            <person name="Kondo S."/>
            <person name="Konno H."/>
            <person name="Nakano K."/>
            <person name="Ninomiya N."/>
            <person name="Nishio T."/>
            <person name="Okada M."/>
            <person name="Plessy C."/>
            <person name="Shibata K."/>
            <person name="Shiraki T."/>
            <person name="Suzuki S."/>
            <person name="Tagami M."/>
            <person name="Waki K."/>
            <person name="Watahiki A."/>
            <person name="Okamura-Oho Y."/>
            <person name="Suzuki H."/>
            <person name="Kawai J."/>
            <person name="Hayashizaki Y."/>
        </authorList>
    </citation>
    <scope>NUCLEOTIDE SEQUENCE [LARGE SCALE MRNA] OF 1-616 (ISOFORM 1)</scope>
    <source>
        <strain>C57BL/6J</strain>
        <tissue>Testis</tissue>
    </source>
</reference>
<reference key="4">
    <citation type="journal article" date="2010" name="Cell">
        <title>A tissue-specific atlas of mouse protein phosphorylation and expression.</title>
        <authorList>
            <person name="Huttlin E.L."/>
            <person name="Jedrychowski M.P."/>
            <person name="Elias J.E."/>
            <person name="Goswami T."/>
            <person name="Rad R."/>
            <person name="Beausoleil S.A."/>
            <person name="Villen J."/>
            <person name="Haas W."/>
            <person name="Sowa M.E."/>
            <person name="Gygi S.P."/>
        </authorList>
    </citation>
    <scope>IDENTIFICATION BY MASS SPECTROMETRY [LARGE SCALE ANALYSIS]</scope>
    <source>
        <tissue>Testis</tissue>
    </source>
</reference>
<reference key="5">
    <citation type="journal article" date="2021" name="Development">
        <title>CFAP61 is required for sperm flagellum formation and male fertility in human and mouse.</title>
        <authorList>
            <person name="Liu S."/>
            <person name="Zhang J."/>
            <person name="Kherraf Z.E."/>
            <person name="Sun S."/>
            <person name="Zhang X."/>
            <person name="Cazin C."/>
            <person name="Coutton C."/>
            <person name="Zouari R."/>
            <person name="Zhao S."/>
            <person name="Hu F."/>
            <person name="Fourati Ben Mustapha S."/>
            <person name="Arnoult C."/>
            <person name="Ray P.F."/>
            <person name="Liu M."/>
        </authorList>
    </citation>
    <scope>FUNCTION</scope>
    <scope>TISSUE SPECIFICITY</scope>
    <scope>SUBUNIT</scope>
    <scope>INTERACTION WITH CFAP91; ODAD2; RSPH3A; ROPN1; ROPN1L; RSPH9; DYNLT1; DYNC1I2; TUBB3; WDR35; IFT22 AND IFT81</scope>
    <scope>SUBCELLULAR LOCATION</scope>
    <scope>DISRUPTION PHENOTYPE</scope>
</reference>
<reference key="6">
    <citation type="journal article" date="2023" name="J. Med. Genet.">
        <title>Biallelic CFAP61 variants cause male infertility in humans and mice with severe oligoasthenoteratozoospermia.</title>
        <authorList>
            <person name="Hu T."/>
            <person name="Meng L."/>
            <person name="Tan C."/>
            <person name="Luo C."/>
            <person name="He W.B."/>
            <person name="Tu C."/>
            <person name="Zhang H."/>
            <person name="Du J."/>
            <person name="Nie H."/>
            <person name="Lu G.X."/>
            <person name="Lin G."/>
            <person name="Tan Y.Q."/>
        </authorList>
    </citation>
    <scope>FUNCTION</scope>
    <scope>SUBCELLULAR LOCATION</scope>
    <scope>DISRUPTION PHENOTYPE</scope>
</reference>
<keyword id="KW-0025">Alternative splicing</keyword>
<keyword id="KW-0966">Cell projection</keyword>
<keyword id="KW-0969">Cilium</keyword>
<keyword id="KW-0963">Cytoplasm</keyword>
<keyword id="KW-0206">Cytoskeleton</keyword>
<keyword id="KW-0282">Flagellum</keyword>
<keyword id="KW-1185">Reference proteome</keyword>
<accession>Q8CEL2</accession>
<accession>Q3KNX7</accession>
<accession>Q8R1E0</accession>
<organism>
    <name type="scientific">Mus musculus</name>
    <name type="common">Mouse</name>
    <dbReference type="NCBI Taxonomy" id="10090"/>
    <lineage>
        <taxon>Eukaryota</taxon>
        <taxon>Metazoa</taxon>
        <taxon>Chordata</taxon>
        <taxon>Craniata</taxon>
        <taxon>Vertebrata</taxon>
        <taxon>Euteleostomi</taxon>
        <taxon>Mammalia</taxon>
        <taxon>Eutheria</taxon>
        <taxon>Euarchontoglires</taxon>
        <taxon>Glires</taxon>
        <taxon>Rodentia</taxon>
        <taxon>Myomorpha</taxon>
        <taxon>Muroidea</taxon>
        <taxon>Muridae</taxon>
        <taxon>Murinae</taxon>
        <taxon>Mus</taxon>
        <taxon>Mus</taxon>
    </lineage>
</organism>
<comment type="function">
    <text evidence="1 2">Involved in sperm flagellum assembly (PubMed:34792097, PubMed:35387802). Plays an essential role in the formation of the radial spokes in flagellum axoneme (PubMed:34792097, PubMed:35387802).</text>
</comment>
<comment type="subunit">
    <text evidence="1 5">Component of axonemal radial spokes, the protein complexes that link the outer microtubule doublets with the central pair of microtubules (Probable). Interacts with CFAP91/MAATS1, ODAD2/ARMC4, RSPH3A, ROPN1, ROPN1L and RSPH9 (PubMed:34792097). Interacts with DYNLT1, DYNC1I2 and TUBB3 (PubMed:34792097). Interacts with WDR35, IFT22 and IFT81 (PubMed:34792097).</text>
</comment>
<comment type="subcellular location">
    <subcellularLocation>
        <location evidence="1 2">Cytoplasm</location>
        <location evidence="1 2">Cytoskeleton</location>
        <location evidence="1 2">Flagellum axoneme</location>
    </subcellularLocation>
</comment>
<comment type="alternative products">
    <event type="alternative splicing"/>
    <isoform>
        <id>Q8CEL2-1</id>
        <name>1</name>
        <sequence type="displayed"/>
    </isoform>
    <isoform>
        <id>Q8CEL2-2</id>
        <name>2</name>
        <sequence type="described" ref="VSP_026930 VSP_026931"/>
    </isoform>
</comment>
<comment type="tissue specificity">
    <text evidence="1">Expressed in testis, brain and lung; the expression in testis is higher than that in other organs (PubMed:34792097). Detected in spermatozoa in seminiferous tubules (at protein level) (PubMed:34792097). Not detected in the respiratory tract cilia (PubMed:34792097).</text>
</comment>
<comment type="disruption phenotype">
    <text evidence="1 2">CFAP61-null male mice are infertile. The epididymis contains fewer spermatozoa in the cauda and caput regions compared to wild-type animals, and spermatozoa exhibit short, bent, curled, thick or missing flagella, and are immobile (PubMed:34792097, PubMed:35387802). Acrosome morphology is normal. The length and motility of respiratory tract cilia is also normal (PubMed:34792097).</text>
</comment>
<comment type="sequence caution" evidence="4">
    <conflict type="frameshift">
        <sequence resource="EMBL-CDS" id="BAC25604"/>
    </conflict>
</comment>
<proteinExistence type="evidence at protein level"/>
<feature type="chain" id="PRO_0000079418" description="Cilia- and flagella-associated protein 61" evidence="4">
    <location>
        <begin position="1"/>
        <end position="1252"/>
    </location>
</feature>
<feature type="splice variant" id="VSP_026930" description="In isoform 2." evidence="3">
    <original>EGK</original>
    <variation>GDR</variation>
    <location>
        <begin position="235"/>
        <end position="237"/>
    </location>
</feature>
<feature type="splice variant" id="VSP_026931" description="In isoform 2." evidence="3">
    <location>
        <begin position="238"/>
        <end position="1252"/>
    </location>
</feature>
<feature type="sequence conflict" description="In Ref. 3; BAC25604." evidence="4" ref="3">
    <original>EKHLKKCSTSLIIREMQIKTTLRFHLTPVRMAKIKNS</original>
    <variation>DAESQGSPKVVEEQEMAPEITQEK</variation>
    <location>
        <begin position="287"/>
        <end position="323"/>
    </location>
</feature>
<feature type="sequence conflict" description="In Ref. 3; BAC25604." evidence="4" ref="3">
    <location>
        <begin position="409"/>
        <end position="417"/>
    </location>
</feature>
<feature type="sequence conflict" description="In Ref. 3; BAC25604." evidence="4" ref="3">
    <original>LQ</original>
    <variation>VR</variation>
    <location>
        <begin position="615"/>
        <end position="616"/>
    </location>
</feature>
<feature type="sequence conflict" description="In Ref. 2; AAH24760." evidence="4" ref="2">
    <original>VSKDQ</original>
    <variation>SDPRK</variation>
    <location>
        <begin position="655"/>
        <end position="659"/>
    </location>
</feature>
<feature type="sequence conflict" description="In Ref. 2; AAH24760." evidence="4" ref="2">
    <original>I</original>
    <variation>L</variation>
    <location>
        <position position="1223"/>
    </location>
</feature>
<protein>
    <recommendedName>
        <fullName evidence="6">Cilia- and flagella-associated protein 61</fullName>
    </recommendedName>
</protein>
<gene>
    <name evidence="6" type="primary">Cfap61</name>
</gene>
<sequence length="1252" mass="143289">MSILTSPRGKVEVVHCRRTESQDIFCIKNLVRKFTQKLFGRLNIIYLLEKANLAVTVCNDKEEIMAHSIFLDYPNWNVAKQDNWIPLFRELDKEIPCTPLNTLFMHFFVAVDEYATGCLKEIIRTVFKAVPELYFIFLIVPTYLSLGSTLITVFDQVGNIPCLNYNEDFAVHICHRHNHYPQLHIRKARVEDHDDLMPIFMHYDNTLKEIYGEYFLAELIEAQDKDHHAVVCEVEGKAVGFMSVCTSVNLPLLHECFDLGPFHGFCTPHPDDILKPSREPSLEEGEEKHLKKCSTSLIIREMQIKTTLRFHLTPVRMAKIKNSETETSASCEEALPTVLGLVSEERLKQDMEKNLSILSLVDEEDVASSLSSSLLLSVESSHFRPLYLGDPIAFCIQLFCIDERYEARQVLISNVSLSLDFMSFVFSLFPGKNFCLISVPHLTPEFVLIQNFVKVVPFNNCTLDHDLYVFHRAGLLRSITIRLAKFLDTAGVEKLVSTLLLSTKILDDLAQYNEAGRDPDGTALQVFVAEVADQIVGIAVIRKEMDIEYIRSHYNIEDFIYFSHHQQEEHGRLNHFALNPIFRHYTKFFLKEILRLGYKSCLYYPVYPQTREGKLQSSYSHSLTSALHYLVPVRPRRQIVYPLEKLGINAPSKEVSKDQVSFALNHTNRKLTLEPKVTVNARIVVVGASSVGISFLETLVFCSHLKFNNLTLISTHGLPGKRLLHNEQRKFLASDHCFNDKDYALMSLCSWVNVVVGRMTAIDRAAKQVVVSKSEIVFYDHLILCTGLQYQVPCPTGADTEQHLTNREVLELSKQRYTGTVPSNLFILNDEEDCVRMLCWLRNSSILTEGKVIVYGNTLDAYTTVETLLNIGMKGSGIYFVHPPTESNITCINNNDVESAVEDALSAAGVTVFHDALLAQWNHGQHPDPIYNACFTTSTKPIRLECSAFFSFYKKNVDYETFKAFNDACLVYDGRLVIDTTFHTNDIAIRAAGSLTKFSNRYYSNEWTHSNFSSKEIGFQLAAAMLSLFDPTLEPVTEPPADLDRLIPMYKGAKIQGGILPGSYHYLHISKPAIPTPLNLQRSQPDFGSDVVTGNAKKGTYFRLYINNYKLVEAITCFSKEPFPSSNYIRLFGQHEQVLNNLCTRFDDKLIPDLYSYFTEPWCMALFHDRFIDLKKELRQILISKQEEDKPTMEEIAYRLEEEEINLNEKPQKYLQRVFEDSIYKSLLEKSILDYLHYNQYHLPMYAWPGII</sequence>
<name>CFA61_MOUSE</name>
<evidence type="ECO:0000269" key="1">
    <source>
    </source>
</evidence>
<evidence type="ECO:0000269" key="2">
    <source>
    </source>
</evidence>
<evidence type="ECO:0000303" key="3">
    <source>
    </source>
</evidence>
<evidence type="ECO:0000305" key="4"/>
<evidence type="ECO:0000305" key="5">
    <source>
    </source>
</evidence>
<evidence type="ECO:0000312" key="6">
    <source>
        <dbReference type="MGI" id="MGI:1926024"/>
    </source>
</evidence>